<reference key="1">
    <citation type="journal article" date="2003" name="Nature">
        <title>Unique physiological and pathogenic features of Leptospira interrogans revealed by whole-genome sequencing.</title>
        <authorList>
            <person name="Ren S.-X."/>
            <person name="Fu G."/>
            <person name="Jiang X.-G."/>
            <person name="Zeng R."/>
            <person name="Miao Y.-G."/>
            <person name="Xu H."/>
            <person name="Zhang Y.-X."/>
            <person name="Xiong H."/>
            <person name="Lu G."/>
            <person name="Lu L.-F."/>
            <person name="Jiang H.-Q."/>
            <person name="Jia J."/>
            <person name="Tu Y.-F."/>
            <person name="Jiang J.-X."/>
            <person name="Gu W.-Y."/>
            <person name="Zhang Y.-Q."/>
            <person name="Cai Z."/>
            <person name="Sheng H.-H."/>
            <person name="Yin H.-F."/>
            <person name="Zhang Y."/>
            <person name="Zhu G.-F."/>
            <person name="Wan M."/>
            <person name="Huang H.-L."/>
            <person name="Qian Z."/>
            <person name="Wang S.-Y."/>
            <person name="Ma W."/>
            <person name="Yao Z.-J."/>
            <person name="Shen Y."/>
            <person name="Qiang B.-Q."/>
            <person name="Xia Q.-C."/>
            <person name="Guo X.-K."/>
            <person name="Danchin A."/>
            <person name="Saint Girons I."/>
            <person name="Somerville R.L."/>
            <person name="Wen Y.-M."/>
            <person name="Shi M.-H."/>
            <person name="Chen Z."/>
            <person name="Xu J.-G."/>
            <person name="Zhao G.-P."/>
        </authorList>
    </citation>
    <scope>NUCLEOTIDE SEQUENCE [LARGE SCALE GENOMIC DNA]</scope>
    <source>
        <strain>56601</strain>
    </source>
</reference>
<feature type="chain" id="PRO_0000114200" description="Chromosomal replication initiator protein DnaA">
    <location>
        <begin position="1"/>
        <end position="443"/>
    </location>
</feature>
<feature type="region of interest" description="Domain I, interacts with DnaA modulators" evidence="1">
    <location>
        <begin position="1"/>
        <end position="80"/>
    </location>
</feature>
<feature type="region of interest" description="Domain II" evidence="1">
    <location>
        <begin position="80"/>
        <end position="104"/>
    </location>
</feature>
<feature type="region of interest" description="Domain III, AAA+ region" evidence="1">
    <location>
        <begin position="105"/>
        <end position="321"/>
    </location>
</feature>
<feature type="region of interest" description="Domain IV, binds dsDNA" evidence="1">
    <location>
        <begin position="322"/>
        <end position="443"/>
    </location>
</feature>
<feature type="binding site" evidence="1">
    <location>
        <position position="148"/>
    </location>
    <ligand>
        <name>ATP</name>
        <dbReference type="ChEBI" id="CHEBI:30616"/>
    </ligand>
</feature>
<feature type="binding site" evidence="1">
    <location>
        <position position="150"/>
    </location>
    <ligand>
        <name>ATP</name>
        <dbReference type="ChEBI" id="CHEBI:30616"/>
    </ligand>
</feature>
<feature type="binding site" evidence="1">
    <location>
        <position position="151"/>
    </location>
    <ligand>
        <name>ATP</name>
        <dbReference type="ChEBI" id="CHEBI:30616"/>
    </ligand>
</feature>
<feature type="binding site" evidence="1">
    <location>
        <position position="152"/>
    </location>
    <ligand>
        <name>ATP</name>
        <dbReference type="ChEBI" id="CHEBI:30616"/>
    </ligand>
</feature>
<comment type="function">
    <text evidence="1">Plays an essential role in the initiation and regulation of chromosomal replication. ATP-DnaA binds to the origin of replication (oriC) to initiate formation of the DNA replication initiation complex once per cell cycle. Binds the DnaA box (a 9 base pair repeat at the origin) and separates the double-stranded (ds)DNA. Forms a right-handed helical filament on oriC DNA; dsDNA binds to the exterior of the filament while single-stranded (ss)DNA is stabiized in the filament's interior. The ATP-DnaA-oriC complex binds and stabilizes one strand of the AT-rich DNA unwinding element (DUE), permitting loading of DNA polymerase. After initiation quickly degrades to an ADP-DnaA complex that is not apt for DNA replication. Binds acidic phospholipids.</text>
</comment>
<comment type="subunit">
    <text evidence="1">Oligomerizes as a right-handed, spiral filament on DNA at oriC.</text>
</comment>
<comment type="subcellular location">
    <subcellularLocation>
        <location evidence="1">Cytoplasm</location>
    </subcellularLocation>
</comment>
<comment type="domain">
    <text evidence="1">Domain I is involved in oligomerization and binding regulators, domain II is flexibile and of varying length in different bacteria, domain III forms the AAA+ region, while domain IV binds dsDNA.</text>
</comment>
<comment type="similarity">
    <text evidence="1">Belongs to the DnaA family.</text>
</comment>
<sequence length="443" mass="51622">MFLEEKLNLVWNKILEEVSKKISPQYYERFIDTLKLETINSEKCTIIAPSATIKTHVERKYQSIIENAILETCGDKIPVEILIETKAASPLQSILEKSFDQKDFQFNPDYTFETFIVGDCNRLAYTAAKECVRKPAEINPLYIFGSVGVGKTHLLHAIGSELTKKDPWKTVCYVDISSFMNEFRFALQSRELIESFKIKYQSYNCLIVDDIQLLSTNAEKTQDEFFALFNFLFERKRQIVIASDRPSSELAIHERLKSRFVTGVQADIQYPDREIRKGIVTHHSKIMDLGLSEDILDFLADQIEEDTRLLLGALNDIYLYKKSYSLLFLNLDKVKEIVKNRLYRKKNIEFSHDRIIEAVAKEFNLNTAEIMGKSRKKELIIPRHICFYLLHNVFNVNKSQVGRLFQTQHTTVIHGVRKTEELLSNNKEMRFLVERISSKYKLQ</sequence>
<name>DNAA_LEPIN</name>
<gene>
    <name evidence="1" type="primary">dnaA</name>
    <name type="ordered locus">LA_0001</name>
</gene>
<protein>
    <recommendedName>
        <fullName evidence="1">Chromosomal replication initiator protein DnaA</fullName>
    </recommendedName>
</protein>
<keyword id="KW-0067">ATP-binding</keyword>
<keyword id="KW-0963">Cytoplasm</keyword>
<keyword id="KW-0235">DNA replication</keyword>
<keyword id="KW-0238">DNA-binding</keyword>
<keyword id="KW-0446">Lipid-binding</keyword>
<keyword id="KW-0547">Nucleotide-binding</keyword>
<keyword id="KW-1185">Reference proteome</keyword>
<accession>Q8FA34</accession>
<dbReference type="EMBL" id="AE010300">
    <property type="protein sequence ID" value="AAN47200.1"/>
    <property type="molecule type" value="Genomic_DNA"/>
</dbReference>
<dbReference type="RefSeq" id="NP_710182.1">
    <property type="nucleotide sequence ID" value="NC_004342.2"/>
</dbReference>
<dbReference type="RefSeq" id="WP_000478209.1">
    <property type="nucleotide sequence ID" value="NC_004342.2"/>
</dbReference>
<dbReference type="SMR" id="Q8FA34"/>
<dbReference type="FunCoup" id="Q8FA34">
    <property type="interactions" value="269"/>
</dbReference>
<dbReference type="STRING" id="189518.LA_0001"/>
<dbReference type="PaxDb" id="189518-LA_0001"/>
<dbReference type="EnsemblBacteria" id="AAN47200">
    <property type="protein sequence ID" value="AAN47200"/>
    <property type="gene ID" value="LA_0001"/>
</dbReference>
<dbReference type="GeneID" id="61143356"/>
<dbReference type="KEGG" id="lil:LA_0001"/>
<dbReference type="PATRIC" id="fig|189518.3.peg.1"/>
<dbReference type="HOGENOM" id="CLU_026910_3_2_12"/>
<dbReference type="InParanoid" id="Q8FA34"/>
<dbReference type="OrthoDB" id="9807019at2"/>
<dbReference type="Proteomes" id="UP000001408">
    <property type="component" value="Chromosome I"/>
</dbReference>
<dbReference type="GO" id="GO:0005737">
    <property type="term" value="C:cytoplasm"/>
    <property type="evidence" value="ECO:0007669"/>
    <property type="project" value="UniProtKB-SubCell"/>
</dbReference>
<dbReference type="GO" id="GO:0005886">
    <property type="term" value="C:plasma membrane"/>
    <property type="evidence" value="ECO:0000318"/>
    <property type="project" value="GO_Central"/>
</dbReference>
<dbReference type="GO" id="GO:0005524">
    <property type="term" value="F:ATP binding"/>
    <property type="evidence" value="ECO:0007669"/>
    <property type="project" value="UniProtKB-UniRule"/>
</dbReference>
<dbReference type="GO" id="GO:0016887">
    <property type="term" value="F:ATP hydrolysis activity"/>
    <property type="evidence" value="ECO:0007669"/>
    <property type="project" value="InterPro"/>
</dbReference>
<dbReference type="GO" id="GO:0003688">
    <property type="term" value="F:DNA replication origin binding"/>
    <property type="evidence" value="ECO:0000318"/>
    <property type="project" value="GO_Central"/>
</dbReference>
<dbReference type="GO" id="GO:0008289">
    <property type="term" value="F:lipid binding"/>
    <property type="evidence" value="ECO:0007669"/>
    <property type="project" value="UniProtKB-KW"/>
</dbReference>
<dbReference type="GO" id="GO:0006260">
    <property type="term" value="P:DNA replication"/>
    <property type="evidence" value="ECO:0000318"/>
    <property type="project" value="GO_Central"/>
</dbReference>
<dbReference type="GO" id="GO:0006270">
    <property type="term" value="P:DNA replication initiation"/>
    <property type="evidence" value="ECO:0000318"/>
    <property type="project" value="GO_Central"/>
</dbReference>
<dbReference type="GO" id="GO:0006275">
    <property type="term" value="P:regulation of DNA replication"/>
    <property type="evidence" value="ECO:0007669"/>
    <property type="project" value="UniProtKB-UniRule"/>
</dbReference>
<dbReference type="CDD" id="cd00009">
    <property type="entry name" value="AAA"/>
    <property type="match status" value="1"/>
</dbReference>
<dbReference type="CDD" id="cd06571">
    <property type="entry name" value="Bac_DnaA_C"/>
    <property type="match status" value="1"/>
</dbReference>
<dbReference type="FunFam" id="3.40.50.300:FF:000668">
    <property type="entry name" value="Chromosomal replication initiator protein DnaA"/>
    <property type="match status" value="1"/>
</dbReference>
<dbReference type="Gene3D" id="1.10.1750.10">
    <property type="match status" value="1"/>
</dbReference>
<dbReference type="Gene3D" id="1.10.8.60">
    <property type="match status" value="1"/>
</dbReference>
<dbReference type="Gene3D" id="3.30.300.180">
    <property type="match status" value="1"/>
</dbReference>
<dbReference type="Gene3D" id="3.40.50.300">
    <property type="entry name" value="P-loop containing nucleotide triphosphate hydrolases"/>
    <property type="match status" value="1"/>
</dbReference>
<dbReference type="HAMAP" id="MF_00377">
    <property type="entry name" value="DnaA_bact"/>
    <property type="match status" value="1"/>
</dbReference>
<dbReference type="InterPro" id="IPR003593">
    <property type="entry name" value="AAA+_ATPase"/>
</dbReference>
<dbReference type="InterPro" id="IPR001957">
    <property type="entry name" value="Chromosome_initiator_DnaA"/>
</dbReference>
<dbReference type="InterPro" id="IPR020591">
    <property type="entry name" value="Chromosome_initiator_DnaA-like"/>
</dbReference>
<dbReference type="InterPro" id="IPR013159">
    <property type="entry name" value="DnaA_C"/>
</dbReference>
<dbReference type="InterPro" id="IPR013317">
    <property type="entry name" value="DnaA_dom"/>
</dbReference>
<dbReference type="InterPro" id="IPR024633">
    <property type="entry name" value="DnaA_N_dom"/>
</dbReference>
<dbReference type="InterPro" id="IPR038454">
    <property type="entry name" value="DnaA_N_sf"/>
</dbReference>
<dbReference type="InterPro" id="IPR027417">
    <property type="entry name" value="P-loop_NTPase"/>
</dbReference>
<dbReference type="InterPro" id="IPR010921">
    <property type="entry name" value="Trp_repressor/repl_initiator"/>
</dbReference>
<dbReference type="NCBIfam" id="TIGR00362">
    <property type="entry name" value="DnaA"/>
    <property type="match status" value="1"/>
</dbReference>
<dbReference type="PANTHER" id="PTHR30050">
    <property type="entry name" value="CHROMOSOMAL REPLICATION INITIATOR PROTEIN DNAA"/>
    <property type="match status" value="1"/>
</dbReference>
<dbReference type="PANTHER" id="PTHR30050:SF2">
    <property type="entry name" value="CHROMOSOMAL REPLICATION INITIATOR PROTEIN DNAA"/>
    <property type="match status" value="1"/>
</dbReference>
<dbReference type="Pfam" id="PF00308">
    <property type="entry name" value="Bac_DnaA"/>
    <property type="match status" value="1"/>
</dbReference>
<dbReference type="Pfam" id="PF08299">
    <property type="entry name" value="Bac_DnaA_C"/>
    <property type="match status" value="1"/>
</dbReference>
<dbReference type="Pfam" id="PF11638">
    <property type="entry name" value="DnaA_N"/>
    <property type="match status" value="1"/>
</dbReference>
<dbReference type="PRINTS" id="PR00051">
    <property type="entry name" value="DNAA"/>
</dbReference>
<dbReference type="SMART" id="SM00382">
    <property type="entry name" value="AAA"/>
    <property type="match status" value="1"/>
</dbReference>
<dbReference type="SMART" id="SM00760">
    <property type="entry name" value="Bac_DnaA_C"/>
    <property type="match status" value="1"/>
</dbReference>
<dbReference type="SUPFAM" id="SSF52540">
    <property type="entry name" value="P-loop containing nucleoside triphosphate hydrolases"/>
    <property type="match status" value="1"/>
</dbReference>
<dbReference type="SUPFAM" id="SSF48295">
    <property type="entry name" value="TrpR-like"/>
    <property type="match status" value="1"/>
</dbReference>
<organism>
    <name type="scientific">Leptospira interrogans serogroup Icterohaemorrhagiae serovar Lai (strain 56601)</name>
    <dbReference type="NCBI Taxonomy" id="189518"/>
    <lineage>
        <taxon>Bacteria</taxon>
        <taxon>Pseudomonadati</taxon>
        <taxon>Spirochaetota</taxon>
        <taxon>Spirochaetia</taxon>
        <taxon>Leptospirales</taxon>
        <taxon>Leptospiraceae</taxon>
        <taxon>Leptospira</taxon>
    </lineage>
</organism>
<proteinExistence type="inferred from homology"/>
<evidence type="ECO:0000255" key="1">
    <source>
        <dbReference type="HAMAP-Rule" id="MF_00377"/>
    </source>
</evidence>